<proteinExistence type="evidence at protein level"/>
<keyword id="KW-0002">3D-structure</keyword>
<keyword id="KW-0963">Cytoplasm</keyword>
<keyword id="KW-0343">GTPase activation</keyword>
<keyword id="KW-0653">Protein transport</keyword>
<keyword id="KW-1185">Reference proteome</keyword>
<keyword id="KW-0813">Transport</keyword>
<evidence type="ECO:0000269" key="1">
    <source>
    </source>
</evidence>
<evidence type="ECO:0000269" key="2">
    <source>
    </source>
</evidence>
<evidence type="ECO:0000269" key="3">
    <source>
    </source>
</evidence>
<evidence type="ECO:0000269" key="4">
    <source>
    </source>
</evidence>
<evidence type="ECO:0000269" key="5">
    <source>
    </source>
</evidence>
<evidence type="ECO:0000269" key="6">
    <source>
    </source>
</evidence>
<evidence type="ECO:0000305" key="7"/>
<evidence type="ECO:0007829" key="8">
    <source>
        <dbReference type="PDB" id="2BCG"/>
    </source>
</evidence>
<evidence type="ECO:0007829" key="9">
    <source>
        <dbReference type="PDB" id="3CPI"/>
    </source>
</evidence>
<evidence type="ECO:0007829" key="10">
    <source>
        <dbReference type="PDB" id="3CPJ"/>
    </source>
</evidence>
<dbReference type="EMBL" id="S69371">
    <property type="protein sequence ID" value="AAB30540.1"/>
    <property type="molecule type" value="Genomic_DNA"/>
</dbReference>
<dbReference type="EMBL" id="U18916">
    <property type="protein sequence ID" value="AAC03234.1"/>
    <property type="molecule type" value="Genomic_DNA"/>
</dbReference>
<dbReference type="EMBL" id="BK006939">
    <property type="protein sequence ID" value="DAA07795.1"/>
    <property type="molecule type" value="Genomic_DNA"/>
</dbReference>
<dbReference type="PIR" id="S44446">
    <property type="entry name" value="S44446"/>
</dbReference>
<dbReference type="RefSeq" id="NP_011062.1">
    <property type="nucleotide sequence ID" value="NM_001179026.1"/>
</dbReference>
<dbReference type="PDB" id="1UKV">
    <property type="method" value="X-ray"/>
    <property type="resolution" value="1.50 A"/>
    <property type="chains" value="G=1-451"/>
</dbReference>
<dbReference type="PDB" id="2BCG">
    <property type="method" value="X-ray"/>
    <property type="resolution" value="1.48 A"/>
    <property type="chains" value="G=1-451"/>
</dbReference>
<dbReference type="PDB" id="3CPH">
    <property type="method" value="X-ray"/>
    <property type="resolution" value="2.90 A"/>
    <property type="chains" value="G/H=1-451"/>
</dbReference>
<dbReference type="PDB" id="3CPI">
    <property type="method" value="X-ray"/>
    <property type="resolution" value="2.30 A"/>
    <property type="chains" value="G/H=1-451"/>
</dbReference>
<dbReference type="PDB" id="3CPJ">
    <property type="method" value="X-ray"/>
    <property type="resolution" value="2.35 A"/>
    <property type="chains" value="G=1-451"/>
</dbReference>
<dbReference type="PDBsum" id="1UKV"/>
<dbReference type="PDBsum" id="2BCG"/>
<dbReference type="PDBsum" id="3CPH"/>
<dbReference type="PDBsum" id="3CPI"/>
<dbReference type="PDBsum" id="3CPJ"/>
<dbReference type="SMR" id="P39958"/>
<dbReference type="BioGRID" id="36882">
    <property type="interactions" value="304"/>
</dbReference>
<dbReference type="DIP" id="DIP-785N"/>
<dbReference type="FunCoup" id="P39958">
    <property type="interactions" value="1024"/>
</dbReference>
<dbReference type="IntAct" id="P39958">
    <property type="interactions" value="52"/>
</dbReference>
<dbReference type="MINT" id="P39958"/>
<dbReference type="STRING" id="4932.YER136W"/>
<dbReference type="iPTMnet" id="P39958"/>
<dbReference type="PaxDb" id="4932-YER136W"/>
<dbReference type="PeptideAtlas" id="P39958"/>
<dbReference type="EnsemblFungi" id="YER136W_mRNA">
    <property type="protein sequence ID" value="YER136W"/>
    <property type="gene ID" value="YER136W"/>
</dbReference>
<dbReference type="GeneID" id="856876"/>
<dbReference type="KEGG" id="sce:YER136W"/>
<dbReference type="AGR" id="SGD:S000000938"/>
<dbReference type="SGD" id="S000000938">
    <property type="gene designation" value="GDI1"/>
</dbReference>
<dbReference type="VEuPathDB" id="FungiDB:YER136W"/>
<dbReference type="eggNOG" id="KOG1439">
    <property type="taxonomic scope" value="Eukaryota"/>
</dbReference>
<dbReference type="GeneTree" id="ENSGT00950000182994"/>
<dbReference type="HOGENOM" id="CLU_021695_0_0_1"/>
<dbReference type="InParanoid" id="P39958"/>
<dbReference type="OMA" id="FETKAKM"/>
<dbReference type="OrthoDB" id="9446342at2759"/>
<dbReference type="BioCyc" id="YEAST:G3O-30297-MONOMER"/>
<dbReference type="Reactome" id="R-SCE-6798695">
    <property type="pathway name" value="Neutrophil degranulation"/>
</dbReference>
<dbReference type="Reactome" id="R-SCE-8876198">
    <property type="pathway name" value="RAB GEFs exchange GTP for GDP on RABs"/>
</dbReference>
<dbReference type="BioGRID-ORCS" id="856876">
    <property type="hits" value="2 hits in 10 CRISPR screens"/>
</dbReference>
<dbReference type="EvolutionaryTrace" id="P39958"/>
<dbReference type="PRO" id="PR:P39958"/>
<dbReference type="Proteomes" id="UP000002311">
    <property type="component" value="Chromosome V"/>
</dbReference>
<dbReference type="RNAct" id="P39958">
    <property type="molecule type" value="protein"/>
</dbReference>
<dbReference type="GO" id="GO:0005829">
    <property type="term" value="C:cytosol"/>
    <property type="evidence" value="ECO:0000318"/>
    <property type="project" value="GO_Central"/>
</dbReference>
<dbReference type="GO" id="GO:0005096">
    <property type="term" value="F:GTPase activator activity"/>
    <property type="evidence" value="ECO:0007669"/>
    <property type="project" value="UniProtKB-KW"/>
</dbReference>
<dbReference type="GO" id="GO:0005093">
    <property type="term" value="F:Rab GDP-dissociation inhibitor activity"/>
    <property type="evidence" value="ECO:0000314"/>
    <property type="project" value="SGD"/>
</dbReference>
<dbReference type="GO" id="GO:0015031">
    <property type="term" value="P:protein transport"/>
    <property type="evidence" value="ECO:0007669"/>
    <property type="project" value="UniProtKB-KW"/>
</dbReference>
<dbReference type="GO" id="GO:0007264">
    <property type="term" value="P:small GTPase-mediated signal transduction"/>
    <property type="evidence" value="ECO:0007669"/>
    <property type="project" value="InterPro"/>
</dbReference>
<dbReference type="GO" id="GO:0016192">
    <property type="term" value="P:vesicle-mediated transport"/>
    <property type="evidence" value="ECO:0000315"/>
    <property type="project" value="SGD"/>
</dbReference>
<dbReference type="FunFam" id="1.10.405.10:FF:000001">
    <property type="entry name" value="Rab GDP dissociation inhibitor"/>
    <property type="match status" value="1"/>
</dbReference>
<dbReference type="Gene3D" id="3.50.50.60">
    <property type="entry name" value="FAD/NAD(P)-binding domain"/>
    <property type="match status" value="1"/>
</dbReference>
<dbReference type="Gene3D" id="1.10.405.10">
    <property type="entry name" value="Guanine Nucleotide Dissociation Inhibitor, domain 1"/>
    <property type="match status" value="1"/>
</dbReference>
<dbReference type="Gene3D" id="3.30.519.10">
    <property type="entry name" value="Guanine Nucleotide Dissociation Inhibitor, domain 2"/>
    <property type="match status" value="1"/>
</dbReference>
<dbReference type="InterPro" id="IPR036188">
    <property type="entry name" value="FAD/NAD-bd_sf"/>
</dbReference>
<dbReference type="InterPro" id="IPR018203">
    <property type="entry name" value="GDP_dissociation_inhibitor"/>
</dbReference>
<dbReference type="InterPro" id="IPR000806">
    <property type="entry name" value="RabGDI"/>
</dbReference>
<dbReference type="PANTHER" id="PTHR11787:SF8">
    <property type="entry name" value="RAB GDP DISSOCIATION INHIBITOR"/>
    <property type="match status" value="1"/>
</dbReference>
<dbReference type="PANTHER" id="PTHR11787">
    <property type="entry name" value="RAB GDP-DISSOCIATION INHIBITOR"/>
    <property type="match status" value="1"/>
</dbReference>
<dbReference type="Pfam" id="PF00996">
    <property type="entry name" value="GDI"/>
    <property type="match status" value="1"/>
</dbReference>
<dbReference type="PRINTS" id="PR00892">
    <property type="entry name" value="RABGDI"/>
</dbReference>
<dbReference type="PRINTS" id="PR00891">
    <property type="entry name" value="RABGDIREP"/>
</dbReference>
<dbReference type="SUPFAM" id="SSF54373">
    <property type="entry name" value="FAD-linked reductases, C-terminal domain"/>
    <property type="match status" value="1"/>
</dbReference>
<dbReference type="SUPFAM" id="SSF51905">
    <property type="entry name" value="FAD/NAD(P)-binding domain"/>
    <property type="match status" value="2"/>
</dbReference>
<comment type="function">
    <text evidence="2 6">Regulates the GDP/GTP exchange reaction of SEC4 by inhibiting the dissociation of GDP from it, and the subsequent binding of GTP to SEC4. Plays an essential role in the yeast secretory pathway (PubMed:8157010). Extracts GDP-bound YPT7 from vacuolar membranes, antagonizing vacuolar membrane fusion (PubMed:11118206).</text>
</comment>
<comment type="subunit">
    <text evidence="1 5">Interacts with the GDP-bound form of Rab GTPase YPT1. Interacts with YPT10.</text>
</comment>
<comment type="interaction">
    <interactant intactId="EBI-7517">
        <id>P39958</id>
    </interactant>
    <interactant intactId="EBI-16858">
        <id>P07560</id>
        <label>SEC4</label>
    </interactant>
    <organismsDiffer>false</organismsDiffer>
    <experiments>4</experiments>
</comment>
<comment type="interaction">
    <interactant intactId="EBI-7517">
        <id>P39958</id>
    </interactant>
    <interactant intactId="EBI-29399">
        <id>P36017</id>
        <label>VPS21</label>
    </interactant>
    <organismsDiffer>false</organismsDiffer>
    <experiments>5</experiments>
</comment>
<comment type="interaction">
    <interactant intactId="EBI-7517">
        <id>P39958</id>
    </interactant>
    <interactant intactId="EBI-29496">
        <id>P01123</id>
        <label>YPT1</label>
    </interactant>
    <organismsDiffer>false</organismsDiffer>
    <experiments>7</experiments>
</comment>
<comment type="interaction">
    <interactant intactId="EBI-7517">
        <id>P39958</id>
    </interactant>
    <interactant intactId="EBI-29357">
        <id>P38146</id>
        <label>YPT10</label>
    </interactant>
    <organismsDiffer>false</organismsDiffer>
    <experiments>7</experiments>
</comment>
<comment type="interaction">
    <interactant intactId="EBI-7517">
        <id>P39958</id>
    </interactant>
    <interactant intactId="EBI-29379">
        <id>P38555</id>
        <label>YPT31</label>
    </interactant>
    <organismsDiffer>false</organismsDiffer>
    <experiments>6</experiments>
</comment>
<comment type="interaction">
    <interactant intactId="EBI-7517">
        <id>P39958</id>
    </interactant>
    <interactant intactId="EBI-29384">
        <id>P51996</id>
        <label>YPT32</label>
    </interactant>
    <organismsDiffer>false</organismsDiffer>
    <experiments>4</experiments>
</comment>
<comment type="interaction">
    <interactant intactId="EBI-7517">
        <id>P39958</id>
    </interactant>
    <interactant intactId="EBI-29407">
        <id>P36018</id>
        <label>YPT52</label>
    </interactant>
    <organismsDiffer>false</organismsDiffer>
    <experiments>4</experiments>
</comment>
<comment type="interaction">
    <interactant intactId="EBI-7517">
        <id>P39958</id>
    </interactant>
    <interactant intactId="EBI-29503">
        <id>Q99260</id>
        <label>YPT6</label>
    </interactant>
    <organismsDiffer>false</organismsDiffer>
    <experiments>6</experiments>
</comment>
<comment type="interaction">
    <interactant intactId="EBI-7517">
        <id>P39958</id>
    </interactant>
    <interactant intactId="EBI-29509">
        <id>P32939</id>
        <label>YPT7</label>
    </interactant>
    <organismsDiffer>false</organismsDiffer>
    <experiments>4</experiments>
</comment>
<comment type="subcellular location">
    <subcellularLocation>
        <location evidence="3">Cytoplasm</location>
    </subcellularLocation>
</comment>
<comment type="miscellaneous">
    <text evidence="4">Present with 7280 molecules/cell in log phase SD medium.</text>
</comment>
<comment type="similarity">
    <text evidence="7">Belongs to the Rab GDI family.</text>
</comment>
<name>GDI1_YEAST</name>
<reference key="1">
    <citation type="journal article" date="1994" name="EMBO J.">
        <title>GDI1 encodes a GDP dissociation inhibitor that plays an essential role in the yeast secretory pathway.</title>
        <authorList>
            <person name="Garrett M.D."/>
            <person name="Zahner J.E."/>
            <person name="Cheney C.M."/>
            <person name="Novick P.J."/>
        </authorList>
    </citation>
    <scope>NUCLEOTIDE SEQUENCE [GENOMIC DNA]</scope>
    <scope>FUNCTION</scope>
</reference>
<reference key="2">
    <citation type="journal article" date="1997" name="Nature">
        <title>The nucleotide sequence of Saccharomyces cerevisiae chromosome V.</title>
        <authorList>
            <person name="Dietrich F.S."/>
            <person name="Mulligan J.T."/>
            <person name="Hennessy K.M."/>
            <person name="Yelton M.A."/>
            <person name="Allen E."/>
            <person name="Araujo R."/>
            <person name="Aviles E."/>
            <person name="Berno A."/>
            <person name="Brennan T."/>
            <person name="Carpenter J."/>
            <person name="Chen E."/>
            <person name="Cherry J.M."/>
            <person name="Chung E."/>
            <person name="Duncan M."/>
            <person name="Guzman E."/>
            <person name="Hartzell G."/>
            <person name="Hunicke-Smith S."/>
            <person name="Hyman R.W."/>
            <person name="Kayser A."/>
            <person name="Komp C."/>
            <person name="Lashkari D."/>
            <person name="Lew H."/>
            <person name="Lin D."/>
            <person name="Mosedale D."/>
            <person name="Nakahara K."/>
            <person name="Namath A."/>
            <person name="Norgren R."/>
            <person name="Oefner P."/>
            <person name="Oh C."/>
            <person name="Petel F.X."/>
            <person name="Roberts D."/>
            <person name="Sehl P."/>
            <person name="Schramm S."/>
            <person name="Shogren T."/>
            <person name="Smith V."/>
            <person name="Taylor P."/>
            <person name="Wei Y."/>
            <person name="Botstein D."/>
            <person name="Davis R.W."/>
        </authorList>
    </citation>
    <scope>NUCLEOTIDE SEQUENCE [LARGE SCALE GENOMIC DNA]</scope>
    <source>
        <strain>ATCC 204508 / S288c</strain>
    </source>
</reference>
<reference key="3">
    <citation type="journal article" date="2014" name="G3 (Bethesda)">
        <title>The reference genome sequence of Saccharomyces cerevisiae: Then and now.</title>
        <authorList>
            <person name="Engel S.R."/>
            <person name="Dietrich F.S."/>
            <person name="Fisk D.G."/>
            <person name="Binkley G."/>
            <person name="Balakrishnan R."/>
            <person name="Costanzo M.C."/>
            <person name="Dwight S.S."/>
            <person name="Hitz B.C."/>
            <person name="Karra K."/>
            <person name="Nash R.S."/>
            <person name="Weng S."/>
            <person name="Wong E.D."/>
            <person name="Lloyd P."/>
            <person name="Skrzypek M.S."/>
            <person name="Miyasato S.R."/>
            <person name="Simison M."/>
            <person name="Cherry J.M."/>
        </authorList>
    </citation>
    <scope>GENOME REANNOTATION</scope>
    <source>
        <strain>ATCC 204508 / S288c</strain>
    </source>
</reference>
<reference key="4">
    <citation type="journal article" date="1999" name="Mol. Gen. Genet.">
        <title>Characterization of the ORF YBR264c in Saccharomyces cerevisiae, which encodes a new yeast Ypt that is degraded by a proteasome-dependent mechanism.</title>
        <authorList>
            <person name="Louvet O."/>
            <person name="Roumanie O."/>
            <person name="Barthe C."/>
            <person name="Peypouquet M.-F."/>
            <person name="Schaeffer J."/>
            <person name="Doignon F."/>
            <person name="Crouzet M."/>
        </authorList>
    </citation>
    <scope>INTERACTION WITH YPT10</scope>
</reference>
<reference key="5">
    <citation type="journal article" date="2000" name="EMBO J.">
        <title>Sequential action of two GTPases to promote vacuole docking and fusion.</title>
        <authorList>
            <person name="Eitzen G."/>
            <person name="Will E."/>
            <person name="Gallwitz D."/>
            <person name="Haas A."/>
            <person name="Wickner W."/>
        </authorList>
    </citation>
    <scope>FUNCTION</scope>
</reference>
<reference key="6">
    <citation type="journal article" date="2003" name="Nature">
        <title>Global analysis of protein localization in budding yeast.</title>
        <authorList>
            <person name="Huh W.-K."/>
            <person name="Falvo J.V."/>
            <person name="Gerke L.C."/>
            <person name="Carroll A.S."/>
            <person name="Howson R.W."/>
            <person name="Weissman J.S."/>
            <person name="O'Shea E.K."/>
        </authorList>
    </citation>
    <scope>SUBCELLULAR LOCATION [LARGE SCALE ANALYSIS]</scope>
</reference>
<reference key="7">
    <citation type="journal article" date="2003" name="Nature">
        <title>Global analysis of protein expression in yeast.</title>
        <authorList>
            <person name="Ghaemmaghami S."/>
            <person name="Huh W.-K."/>
            <person name="Bower K."/>
            <person name="Howson R.W."/>
            <person name="Belle A."/>
            <person name="Dephoure N."/>
            <person name="O'Shea E.K."/>
            <person name="Weissman J.S."/>
        </authorList>
    </citation>
    <scope>LEVEL OF PROTEIN EXPRESSION [LARGE SCALE ANALYSIS]</scope>
</reference>
<reference key="8">
    <citation type="journal article" date="2009" name="Science">
        <title>Global analysis of Cdk1 substrate phosphorylation sites provides insights into evolution.</title>
        <authorList>
            <person name="Holt L.J."/>
            <person name="Tuch B.B."/>
            <person name="Villen J."/>
            <person name="Johnson A.D."/>
            <person name="Gygi S.P."/>
            <person name="Morgan D.O."/>
        </authorList>
    </citation>
    <scope>IDENTIFICATION BY MASS SPECTROMETRY [LARGE SCALE ANALYSIS]</scope>
</reference>
<reference key="9">
    <citation type="journal article" date="2003" name="Science">
        <title>Structure of Rab GDP-dissociation inhibitor in complex with prenylated YPT1 GTPase.</title>
        <authorList>
            <person name="Rak A."/>
            <person name="Pylypenko O."/>
            <person name="Durek T."/>
            <person name="Watzke A."/>
            <person name="Kushnir S."/>
            <person name="Brunsveld L."/>
            <person name="Waldmann H."/>
            <person name="Goody R.S."/>
            <person name="Alexandrov K."/>
        </authorList>
    </citation>
    <scope>X-RAY CRYSTALLOGRAPHY (1.5 ANGSTROMS) IN COMPLEX WITH YPT1</scope>
</reference>
<reference key="10">
    <citation type="journal article" date="2006" name="EMBO J.">
        <title>Structure of doubly prenylated Ypt1:GDI complex and the mechanism of GDI-mediated Rab recycling.</title>
        <authorList>
            <person name="Pylypenko O."/>
            <person name="Rak A."/>
            <person name="Durek T."/>
            <person name="Kushnir S."/>
            <person name="Dursina B.E."/>
            <person name="Thomae N.H."/>
            <person name="Constantinescu A.T."/>
            <person name="Brunsveld L."/>
            <person name="Watzke A."/>
            <person name="Waldmann H."/>
            <person name="Goody R.S."/>
            <person name="Alexandrov K."/>
        </authorList>
    </citation>
    <scope>X-RAY CRYSTALLOGRAPHY (1.48 ANGSTROMS) IN COMPLEX WITH YPT1</scope>
</reference>
<reference key="11">
    <citation type="journal article" date="2008" name="J. Biol. Chem.">
        <title>A structural model of the GDP dissociation inhibitor rab membrane extraction mechanism.</title>
        <authorList>
            <person name="Ignatev A."/>
            <person name="Kravchenko S."/>
            <person name="Rak A."/>
            <person name="Goody R.S."/>
            <person name="Pylypenko O."/>
        </authorList>
    </citation>
    <scope>X-RAY CRYSTALLOGRAPHY (2.30 ANGSTROMS)</scope>
</reference>
<accession>P39958</accession>
<accession>D3DM41</accession>
<protein>
    <recommendedName>
        <fullName>Rab GDP-dissociation inhibitor</fullName>
        <shortName>Rab GDI</shortName>
    </recommendedName>
    <alternativeName>
        <fullName>Secretory pathway GDP dissociation inhibitor</fullName>
    </alternativeName>
</protein>
<sequence>MDQETIDTDYDVIVLGTGITECILSGLLSVDGKKVLHIDKQDHYGGEAASVTLSQLYEKFKQNPISKEERESKFGKDRDWNVDLIPKFLMANGELTNILIHTDVTRYVDFKQVSGSYVFKQGKIYKVPANEIEAISSPLMGIFEKRRMKKFLEWISSYKEDDLSTHQGLDLDKNTMDEVYYKFGLGNSTKEFIGHAMALWTNDDYLQQPARPSFERILLYCQSVARYGKSPYLYPMYGLGELPQGFARLSAIYGGTYMLDTPIDEVLYKKDTGKFEGVKTKLGTFKAPLVIADPTYFPEKCKSTGQRVIRAICILNHPVPNTSNADSLQIIIPQSQLGRKSDIYVAIVSDAHNVCSKGHYLAIISTIIETDKPHIELEPAFKLLGPIEEKFMGIAELFEPREDGSKDNIYLSRSYDASSHFESMTDDVKDIYFRVTGHPLVLKQRQEQEKQ</sequence>
<feature type="chain" id="PRO_0000056684" description="Rab GDP-dissociation inhibitor">
    <location>
        <begin position="1"/>
        <end position="451"/>
    </location>
</feature>
<feature type="region of interest" description="Interaction with YPT1" evidence="5">
    <location>
        <begin position="106"/>
        <end position="112"/>
    </location>
</feature>
<feature type="region of interest" description="Interaction with YPT1" evidence="5">
    <location>
        <begin position="234"/>
        <end position="259"/>
    </location>
</feature>
<feature type="strand" evidence="8">
    <location>
        <begin position="11"/>
        <end position="15"/>
    </location>
</feature>
<feature type="helix" evidence="8">
    <location>
        <begin position="19"/>
        <end position="30"/>
    </location>
</feature>
<feature type="strand" evidence="8">
    <location>
        <begin position="35"/>
        <end position="38"/>
    </location>
</feature>
<feature type="strand" evidence="8">
    <location>
        <begin position="40"/>
        <end position="44"/>
    </location>
</feature>
<feature type="helix" evidence="8">
    <location>
        <begin position="46"/>
        <end position="48"/>
    </location>
</feature>
<feature type="helix" evidence="8">
    <location>
        <begin position="53"/>
        <end position="60"/>
    </location>
</feature>
<feature type="helix" evidence="8">
    <location>
        <begin position="67"/>
        <end position="74"/>
    </location>
</feature>
<feature type="helix" evidence="8">
    <location>
        <begin position="77"/>
        <end position="79"/>
    </location>
</feature>
<feature type="strand" evidence="8">
    <location>
        <begin position="82"/>
        <end position="85"/>
    </location>
</feature>
<feature type="strand" evidence="8">
    <location>
        <begin position="88"/>
        <end position="90"/>
    </location>
</feature>
<feature type="helix" evidence="8">
    <location>
        <begin position="94"/>
        <end position="101"/>
    </location>
</feature>
<feature type="helix" evidence="8">
    <location>
        <begin position="104"/>
        <end position="106"/>
    </location>
</feature>
<feature type="strand" evidence="8">
    <location>
        <begin position="110"/>
        <end position="112"/>
    </location>
</feature>
<feature type="strand" evidence="8">
    <location>
        <begin position="116"/>
        <end position="120"/>
    </location>
</feature>
<feature type="strand" evidence="8">
    <location>
        <begin position="123"/>
        <end position="126"/>
    </location>
</feature>
<feature type="helix" evidence="8">
    <location>
        <begin position="131"/>
        <end position="136"/>
    </location>
</feature>
<feature type="strand" evidence="10">
    <location>
        <begin position="138"/>
        <end position="140"/>
    </location>
</feature>
<feature type="helix" evidence="8">
    <location>
        <begin position="142"/>
        <end position="157"/>
    </location>
</feature>
<feature type="helix" evidence="8">
    <location>
        <begin position="163"/>
        <end position="165"/>
    </location>
</feature>
<feature type="turn" evidence="8">
    <location>
        <begin position="171"/>
        <end position="173"/>
    </location>
</feature>
<feature type="helix" evidence="8">
    <location>
        <begin position="176"/>
        <end position="182"/>
    </location>
</feature>
<feature type="helix" evidence="8">
    <location>
        <begin position="187"/>
        <end position="196"/>
    </location>
</feature>
<feature type="strand" evidence="8">
    <location>
        <begin position="201"/>
        <end position="203"/>
    </location>
</feature>
<feature type="helix" evidence="8">
    <location>
        <begin position="204"/>
        <end position="207"/>
    </location>
</feature>
<feature type="strand" evidence="8">
    <location>
        <begin position="208"/>
        <end position="210"/>
    </location>
</feature>
<feature type="helix" evidence="8">
    <location>
        <begin position="211"/>
        <end position="227"/>
    </location>
</feature>
<feature type="strand" evidence="8">
    <location>
        <begin position="231"/>
        <end position="235"/>
    </location>
</feature>
<feature type="helix" evidence="8">
    <location>
        <begin position="241"/>
        <end position="252"/>
    </location>
</feature>
<feature type="strand" evidence="8">
    <location>
        <begin position="256"/>
        <end position="258"/>
    </location>
</feature>
<feature type="strand" evidence="8">
    <location>
        <begin position="265"/>
        <end position="268"/>
    </location>
</feature>
<feature type="turn" evidence="8">
    <location>
        <begin position="270"/>
        <end position="272"/>
    </location>
</feature>
<feature type="strand" evidence="8">
    <location>
        <begin position="275"/>
        <end position="280"/>
    </location>
</feature>
<feature type="strand" evidence="8">
    <location>
        <begin position="283"/>
        <end position="286"/>
    </location>
</feature>
<feature type="strand" evidence="8">
    <location>
        <begin position="290"/>
        <end position="292"/>
    </location>
</feature>
<feature type="helix" evidence="8">
    <location>
        <begin position="294"/>
        <end position="296"/>
    </location>
</feature>
<feature type="helix" evidence="8">
    <location>
        <begin position="298"/>
        <end position="300"/>
    </location>
</feature>
<feature type="strand" evidence="8">
    <location>
        <begin position="301"/>
        <end position="317"/>
    </location>
</feature>
<feature type="strand" evidence="9">
    <location>
        <begin position="322"/>
        <end position="324"/>
    </location>
</feature>
<feature type="strand" evidence="8">
    <location>
        <begin position="326"/>
        <end position="332"/>
    </location>
</feature>
<feature type="helix" evidence="8">
    <location>
        <begin position="334"/>
        <end position="336"/>
    </location>
</feature>
<feature type="strand" evidence="8">
    <location>
        <begin position="343"/>
        <end position="349"/>
    </location>
</feature>
<feature type="helix" evidence="8">
    <location>
        <begin position="350"/>
        <end position="352"/>
    </location>
</feature>
<feature type="strand" evidence="8">
    <location>
        <begin position="360"/>
        <end position="367"/>
    </location>
</feature>
<feature type="helix" evidence="8">
    <location>
        <begin position="373"/>
        <end position="376"/>
    </location>
</feature>
<feature type="helix" evidence="8">
    <location>
        <begin position="378"/>
        <end position="381"/>
    </location>
</feature>
<feature type="helix" evidence="8">
    <location>
        <begin position="382"/>
        <end position="384"/>
    </location>
</feature>
<feature type="strand" evidence="8">
    <location>
        <begin position="388"/>
        <end position="402"/>
    </location>
</feature>
<feature type="turn" evidence="8">
    <location>
        <begin position="405"/>
        <end position="407"/>
    </location>
</feature>
<feature type="strand" evidence="8">
    <location>
        <begin position="408"/>
        <end position="411"/>
    </location>
</feature>
<feature type="strand" evidence="8">
    <location>
        <begin position="419"/>
        <end position="421"/>
    </location>
</feature>
<feature type="helix" evidence="8">
    <location>
        <begin position="422"/>
        <end position="436"/>
    </location>
</feature>
<organism>
    <name type="scientific">Saccharomyces cerevisiae (strain ATCC 204508 / S288c)</name>
    <name type="common">Baker's yeast</name>
    <dbReference type="NCBI Taxonomy" id="559292"/>
    <lineage>
        <taxon>Eukaryota</taxon>
        <taxon>Fungi</taxon>
        <taxon>Dikarya</taxon>
        <taxon>Ascomycota</taxon>
        <taxon>Saccharomycotina</taxon>
        <taxon>Saccharomycetes</taxon>
        <taxon>Saccharomycetales</taxon>
        <taxon>Saccharomycetaceae</taxon>
        <taxon>Saccharomyces</taxon>
    </lineage>
</organism>
<gene>
    <name type="primary">GDI1</name>
    <name type="synonym">SEC19</name>
    <name type="ordered locus">YER136W</name>
</gene>